<accession>Q1GHF1</accession>
<name>RLME_RUEST</name>
<feature type="chain" id="PRO_0000282805" description="Ribosomal RNA large subunit methyltransferase E">
    <location>
        <begin position="1"/>
        <end position="238"/>
    </location>
</feature>
<feature type="active site" description="Proton acceptor" evidence="1">
    <location>
        <position position="193"/>
    </location>
</feature>
<feature type="binding site" evidence="1">
    <location>
        <position position="85"/>
    </location>
    <ligand>
        <name>S-adenosyl-L-methionine</name>
        <dbReference type="ChEBI" id="CHEBI:59789"/>
    </ligand>
</feature>
<feature type="binding site" evidence="1">
    <location>
        <position position="87"/>
    </location>
    <ligand>
        <name>S-adenosyl-L-methionine</name>
        <dbReference type="ChEBI" id="CHEBI:59789"/>
    </ligand>
</feature>
<feature type="binding site" evidence="1">
    <location>
        <position position="113"/>
    </location>
    <ligand>
        <name>S-adenosyl-L-methionine</name>
        <dbReference type="ChEBI" id="CHEBI:59789"/>
    </ligand>
</feature>
<feature type="binding site" evidence="1">
    <location>
        <position position="129"/>
    </location>
    <ligand>
        <name>S-adenosyl-L-methionine</name>
        <dbReference type="ChEBI" id="CHEBI:59789"/>
    </ligand>
</feature>
<feature type="binding site" evidence="1">
    <location>
        <position position="153"/>
    </location>
    <ligand>
        <name>S-adenosyl-L-methionine</name>
        <dbReference type="ChEBI" id="CHEBI:59789"/>
    </ligand>
</feature>
<keyword id="KW-0963">Cytoplasm</keyword>
<keyword id="KW-0489">Methyltransferase</keyword>
<keyword id="KW-1185">Reference proteome</keyword>
<keyword id="KW-0698">rRNA processing</keyword>
<keyword id="KW-0949">S-adenosyl-L-methionine</keyword>
<keyword id="KW-0808">Transferase</keyword>
<evidence type="ECO:0000255" key="1">
    <source>
        <dbReference type="HAMAP-Rule" id="MF_01547"/>
    </source>
</evidence>
<reference key="1">
    <citation type="submission" date="2006-05" db="EMBL/GenBank/DDBJ databases">
        <title>Complete sequence of chromosome of Silicibacter sp. TM1040.</title>
        <authorList>
            <consortium name="US DOE Joint Genome Institute"/>
            <person name="Copeland A."/>
            <person name="Lucas S."/>
            <person name="Lapidus A."/>
            <person name="Barry K."/>
            <person name="Detter J.C."/>
            <person name="Glavina del Rio T."/>
            <person name="Hammon N."/>
            <person name="Israni S."/>
            <person name="Dalin E."/>
            <person name="Tice H."/>
            <person name="Pitluck S."/>
            <person name="Brettin T."/>
            <person name="Bruce D."/>
            <person name="Han C."/>
            <person name="Tapia R."/>
            <person name="Goodwin L."/>
            <person name="Thompson L.S."/>
            <person name="Gilna P."/>
            <person name="Schmutz J."/>
            <person name="Larimer F."/>
            <person name="Land M."/>
            <person name="Hauser L."/>
            <person name="Kyrpides N."/>
            <person name="Kim E."/>
            <person name="Belas R."/>
            <person name="Moran M.A."/>
            <person name="Buchan A."/>
            <person name="Gonzalez J.M."/>
            <person name="Schell M.A."/>
            <person name="Sun F."/>
            <person name="Richardson P."/>
        </authorList>
    </citation>
    <scope>NUCLEOTIDE SEQUENCE [LARGE SCALE GENOMIC DNA]</scope>
    <source>
        <strain>TM1040</strain>
    </source>
</reference>
<gene>
    <name evidence="1" type="primary">rlmE</name>
    <name evidence="1" type="synonym">ftsJ</name>
    <name evidence="1" type="synonym">rrmJ</name>
    <name type="ordered locus">TM1040_1182</name>
</gene>
<dbReference type="EC" id="2.1.1.166" evidence="1"/>
<dbReference type="EMBL" id="CP000377">
    <property type="protein sequence ID" value="ABF63915.1"/>
    <property type="molecule type" value="Genomic_DNA"/>
</dbReference>
<dbReference type="RefSeq" id="WP_011538522.1">
    <property type="nucleotide sequence ID" value="NC_008044.1"/>
</dbReference>
<dbReference type="SMR" id="Q1GHF1"/>
<dbReference type="STRING" id="292414.TM1040_1182"/>
<dbReference type="KEGG" id="sit:TM1040_1182"/>
<dbReference type="eggNOG" id="COG0293">
    <property type="taxonomic scope" value="Bacteria"/>
</dbReference>
<dbReference type="HOGENOM" id="CLU_009422_4_0_5"/>
<dbReference type="OrthoDB" id="9790080at2"/>
<dbReference type="Proteomes" id="UP000000636">
    <property type="component" value="Chromosome"/>
</dbReference>
<dbReference type="GO" id="GO:0005737">
    <property type="term" value="C:cytoplasm"/>
    <property type="evidence" value="ECO:0007669"/>
    <property type="project" value="UniProtKB-SubCell"/>
</dbReference>
<dbReference type="GO" id="GO:0008650">
    <property type="term" value="F:rRNA (uridine-2'-O-)-methyltransferase activity"/>
    <property type="evidence" value="ECO:0007669"/>
    <property type="project" value="UniProtKB-UniRule"/>
</dbReference>
<dbReference type="Gene3D" id="3.40.50.150">
    <property type="entry name" value="Vaccinia Virus protein VP39"/>
    <property type="match status" value="1"/>
</dbReference>
<dbReference type="HAMAP" id="MF_01547">
    <property type="entry name" value="RNA_methyltr_E"/>
    <property type="match status" value="1"/>
</dbReference>
<dbReference type="InterPro" id="IPR050082">
    <property type="entry name" value="RNA_methyltr_RlmE"/>
</dbReference>
<dbReference type="InterPro" id="IPR002877">
    <property type="entry name" value="RNA_MeTrfase_FtsJ_dom"/>
</dbReference>
<dbReference type="InterPro" id="IPR015507">
    <property type="entry name" value="rRNA-MeTfrase_E"/>
</dbReference>
<dbReference type="InterPro" id="IPR029063">
    <property type="entry name" value="SAM-dependent_MTases_sf"/>
</dbReference>
<dbReference type="PANTHER" id="PTHR10920">
    <property type="entry name" value="RIBOSOMAL RNA METHYLTRANSFERASE"/>
    <property type="match status" value="1"/>
</dbReference>
<dbReference type="PANTHER" id="PTHR10920:SF18">
    <property type="entry name" value="RRNA METHYLTRANSFERASE 2, MITOCHONDRIAL"/>
    <property type="match status" value="1"/>
</dbReference>
<dbReference type="Pfam" id="PF01728">
    <property type="entry name" value="FtsJ"/>
    <property type="match status" value="1"/>
</dbReference>
<dbReference type="PIRSF" id="PIRSF005461">
    <property type="entry name" value="23S_rRNA_mtase"/>
    <property type="match status" value="1"/>
</dbReference>
<dbReference type="SUPFAM" id="SSF53335">
    <property type="entry name" value="S-adenosyl-L-methionine-dependent methyltransferases"/>
    <property type="match status" value="1"/>
</dbReference>
<sequence>MAKKPTGKNTSGRGQRDLTVKVKTARGRRLSSTRWLQRQLNDPYVKRAQAEGYRGRAAFKIMELDDKYRFLVPGARVVDLGCAPGGWAQVAVPRINALGEKSGKAIGRFIGIDLQEVEPLAGAEFHQLDFMDEGADDQVKEWLGGQADVVMSDMAASSSGHKQTDHLRIMSLCETAAYFAFDVLEEGGTFVAKVLAGGAEGELQKLLKQKFKSVANVKPPSSRADSSEKFVVATGFRG</sequence>
<organism>
    <name type="scientific">Ruegeria sp. (strain TM1040)</name>
    <name type="common">Silicibacter sp.</name>
    <dbReference type="NCBI Taxonomy" id="292414"/>
    <lineage>
        <taxon>Bacteria</taxon>
        <taxon>Pseudomonadati</taxon>
        <taxon>Pseudomonadota</taxon>
        <taxon>Alphaproteobacteria</taxon>
        <taxon>Rhodobacterales</taxon>
        <taxon>Roseobacteraceae</taxon>
        <taxon>Ruegeria</taxon>
    </lineage>
</organism>
<proteinExistence type="inferred from homology"/>
<protein>
    <recommendedName>
        <fullName evidence="1">Ribosomal RNA large subunit methyltransferase E</fullName>
        <ecNumber evidence="1">2.1.1.166</ecNumber>
    </recommendedName>
    <alternativeName>
        <fullName evidence="1">23S rRNA Um2552 methyltransferase</fullName>
    </alternativeName>
    <alternativeName>
        <fullName evidence="1">rRNA (uridine-2'-O-)-methyltransferase</fullName>
    </alternativeName>
</protein>
<comment type="function">
    <text evidence="1">Specifically methylates the uridine in position 2552 of 23S rRNA at the 2'-O position of the ribose in the fully assembled 50S ribosomal subunit.</text>
</comment>
<comment type="catalytic activity">
    <reaction evidence="1">
        <text>uridine(2552) in 23S rRNA + S-adenosyl-L-methionine = 2'-O-methyluridine(2552) in 23S rRNA + S-adenosyl-L-homocysteine + H(+)</text>
        <dbReference type="Rhea" id="RHEA:42720"/>
        <dbReference type="Rhea" id="RHEA-COMP:10202"/>
        <dbReference type="Rhea" id="RHEA-COMP:10203"/>
        <dbReference type="ChEBI" id="CHEBI:15378"/>
        <dbReference type="ChEBI" id="CHEBI:57856"/>
        <dbReference type="ChEBI" id="CHEBI:59789"/>
        <dbReference type="ChEBI" id="CHEBI:65315"/>
        <dbReference type="ChEBI" id="CHEBI:74478"/>
        <dbReference type="EC" id="2.1.1.166"/>
    </reaction>
</comment>
<comment type="subcellular location">
    <subcellularLocation>
        <location evidence="1">Cytoplasm</location>
    </subcellularLocation>
</comment>
<comment type="similarity">
    <text evidence="1">Belongs to the class I-like SAM-binding methyltransferase superfamily. RNA methyltransferase RlmE family.</text>
</comment>